<organism>
    <name type="scientific">Pisum sativum</name>
    <name type="common">Garden pea</name>
    <name type="synonym">Lathyrus oleraceus</name>
    <dbReference type="NCBI Taxonomy" id="3888"/>
    <lineage>
        <taxon>Eukaryota</taxon>
        <taxon>Viridiplantae</taxon>
        <taxon>Streptophyta</taxon>
        <taxon>Embryophyta</taxon>
        <taxon>Tracheophyta</taxon>
        <taxon>Spermatophyta</taxon>
        <taxon>Magnoliopsida</taxon>
        <taxon>eudicotyledons</taxon>
        <taxon>Gunneridae</taxon>
        <taxon>Pentapetalae</taxon>
        <taxon>rosids</taxon>
        <taxon>fabids</taxon>
        <taxon>Fabales</taxon>
        <taxon>Fabaceae</taxon>
        <taxon>Papilionoideae</taxon>
        <taxon>50 kb inversion clade</taxon>
        <taxon>NPAAA clade</taxon>
        <taxon>Hologalegina</taxon>
        <taxon>IRL clade</taxon>
        <taxon>Fabeae</taxon>
        <taxon>Pisum</taxon>
    </lineage>
</organism>
<comment type="function">
    <text evidence="4">Catalyzes the formation of the alpha-1,6-glucosidic linkages in starch by scission of a 1,4-alpha-linked oligosaccharide from growing alpha-1,4-glucan chains and the subsequent attachment of the oligosaccharide to the alpha-1,6 position. May preferentially transfer long chains during branching.</text>
</comment>
<comment type="catalytic activity">
    <reaction>
        <text>Transfers a segment of a (1-&gt;4)-alpha-D-glucan chain to a primary hydroxy group in a similar glucan chain.</text>
        <dbReference type="EC" id="2.4.1.18"/>
    </reaction>
</comment>
<comment type="pathway">
    <text>Glycan biosynthesis; starch biosynthesis.</text>
</comment>
<comment type="subunit">
    <text evidence="1">Monomer.</text>
</comment>
<comment type="subcellular location">
    <subcellularLocation>
        <location>Plastid</location>
        <location>Chloroplast</location>
    </subcellularLocation>
    <subcellularLocation>
        <location evidence="5">Plastid</location>
        <location evidence="5">Amyloplast</location>
    </subcellularLocation>
</comment>
<comment type="tissue specificity">
    <text evidence="4">Expressed in roots, leaves, stipules, pods and flowers.</text>
</comment>
<comment type="developmental stage">
    <text evidence="4">Very lov expression in young embryos, increasing during maturation.</text>
</comment>
<comment type="similarity">
    <text evidence="5">Belongs to the glycosyl hydrolase 13 family. GlgB subfamily.</text>
</comment>
<proteinExistence type="evidence at protein level"/>
<protein>
    <recommendedName>
        <fullName>1,4-alpha-glucan-branching enzyme 1, chloroplastic/amyloplastic</fullName>
        <ecNumber>2.4.1.18</ecNumber>
    </recommendedName>
    <alternativeName>
        <fullName>Starch branching enzyme I</fullName>
    </alternativeName>
</protein>
<gene>
    <name type="primary">SBEII</name>
</gene>
<reference key="1">
    <citation type="journal article" date="1995" name="Plant J.">
        <title>Starch branching enzymes belonging to distinct enzyme families are differentially expressed during pea embryo development.</title>
        <authorList>
            <person name="Burton R.A."/>
            <person name="Bewley J.D."/>
            <person name="Smith A.M."/>
            <person name="Bhattacharyya M.K."/>
            <person name="Tatge H."/>
            <person name="Ring S."/>
            <person name="Bull V."/>
            <person name="Hamilton W.D."/>
            <person name="Martin C."/>
        </authorList>
    </citation>
    <scope>NUCLEOTIDE SEQUENCE [MRNA]</scope>
    <scope>PROTEIN SEQUENCE OF 58-72</scope>
    <scope>FUNCTION</scope>
    <scope>DEVELOPMENTAL STAGE</scope>
    <scope>TISSUE SPECIFICITY</scope>
</reference>
<dbReference type="EC" id="2.4.1.18"/>
<dbReference type="EMBL" id="X80010">
    <property type="protein sequence ID" value="CAA56320.1"/>
    <property type="molecule type" value="mRNA"/>
</dbReference>
<dbReference type="PIR" id="T06494">
    <property type="entry name" value="T06494"/>
</dbReference>
<dbReference type="SMR" id="Q41059"/>
<dbReference type="CAZy" id="CBM48">
    <property type="family name" value="Carbohydrate-Binding Module Family 48"/>
</dbReference>
<dbReference type="CAZy" id="GH13">
    <property type="family name" value="Glycoside Hydrolase Family 13"/>
</dbReference>
<dbReference type="UniPathway" id="UPA00152"/>
<dbReference type="GO" id="GO:0009501">
    <property type="term" value="C:amyloplast"/>
    <property type="evidence" value="ECO:0007669"/>
    <property type="project" value="UniProtKB-SubCell"/>
</dbReference>
<dbReference type="GO" id="GO:0009507">
    <property type="term" value="C:chloroplast"/>
    <property type="evidence" value="ECO:0007669"/>
    <property type="project" value="UniProtKB-SubCell"/>
</dbReference>
<dbReference type="GO" id="GO:0003844">
    <property type="term" value="F:1,4-alpha-glucan branching enzyme activity"/>
    <property type="evidence" value="ECO:0007669"/>
    <property type="project" value="UniProtKB-EC"/>
</dbReference>
<dbReference type="GO" id="GO:0043169">
    <property type="term" value="F:cation binding"/>
    <property type="evidence" value="ECO:0007669"/>
    <property type="project" value="InterPro"/>
</dbReference>
<dbReference type="GO" id="GO:0004553">
    <property type="term" value="F:hydrolase activity, hydrolyzing O-glycosyl compounds"/>
    <property type="evidence" value="ECO:0007669"/>
    <property type="project" value="InterPro"/>
</dbReference>
<dbReference type="GO" id="GO:0005978">
    <property type="term" value="P:glycogen biosynthetic process"/>
    <property type="evidence" value="ECO:0007669"/>
    <property type="project" value="InterPro"/>
</dbReference>
<dbReference type="GO" id="GO:0019252">
    <property type="term" value="P:starch biosynthetic process"/>
    <property type="evidence" value="ECO:0007669"/>
    <property type="project" value="UniProtKB-UniPathway"/>
</dbReference>
<dbReference type="CDD" id="cd11321">
    <property type="entry name" value="AmyAc_bac_euk_BE"/>
    <property type="match status" value="1"/>
</dbReference>
<dbReference type="CDD" id="cd02854">
    <property type="entry name" value="E_set_GBE_euk_N"/>
    <property type="match status" value="1"/>
</dbReference>
<dbReference type="FunFam" id="3.20.20.80:FF:000001">
    <property type="entry name" value="1,4-alpha-glucan branching enzyme"/>
    <property type="match status" value="1"/>
</dbReference>
<dbReference type="FunFam" id="2.60.40.10:FF:000250">
    <property type="entry name" value="1,4-alpha-glucan-branching enzyme, chloroplastic/amyloplastic"/>
    <property type="match status" value="1"/>
</dbReference>
<dbReference type="FunFam" id="2.60.40.1180:FF:000003">
    <property type="entry name" value="1,4-alpha-glucan-branching enzyme, chloroplastic/amyloplastic"/>
    <property type="match status" value="1"/>
</dbReference>
<dbReference type="Gene3D" id="3.20.20.80">
    <property type="entry name" value="Glycosidases"/>
    <property type="match status" value="1"/>
</dbReference>
<dbReference type="Gene3D" id="2.60.40.1180">
    <property type="entry name" value="Golgi alpha-mannosidase II"/>
    <property type="match status" value="1"/>
</dbReference>
<dbReference type="Gene3D" id="2.60.40.10">
    <property type="entry name" value="Immunoglobulins"/>
    <property type="match status" value="1"/>
</dbReference>
<dbReference type="InterPro" id="IPR006048">
    <property type="entry name" value="A-amylase/branching_C"/>
</dbReference>
<dbReference type="InterPro" id="IPR037439">
    <property type="entry name" value="Branching_enzy"/>
</dbReference>
<dbReference type="InterPro" id="IPR006047">
    <property type="entry name" value="Glyco_hydro_13_cat_dom"/>
</dbReference>
<dbReference type="InterPro" id="IPR004193">
    <property type="entry name" value="Glyco_hydro_13_N"/>
</dbReference>
<dbReference type="InterPro" id="IPR013780">
    <property type="entry name" value="Glyco_hydro_b"/>
</dbReference>
<dbReference type="InterPro" id="IPR017853">
    <property type="entry name" value="Glycoside_hydrolase_SF"/>
</dbReference>
<dbReference type="InterPro" id="IPR013783">
    <property type="entry name" value="Ig-like_fold"/>
</dbReference>
<dbReference type="InterPro" id="IPR014756">
    <property type="entry name" value="Ig_E-set"/>
</dbReference>
<dbReference type="PANTHER" id="PTHR43651">
    <property type="entry name" value="1,4-ALPHA-GLUCAN-BRANCHING ENZYME"/>
    <property type="match status" value="1"/>
</dbReference>
<dbReference type="PANTHER" id="PTHR43651:SF2">
    <property type="entry name" value="1,4-ALPHA-GLUCAN-BRANCHING ENZYME, CHLOROPLASTIC_AMYLOPLASTIC"/>
    <property type="match status" value="1"/>
</dbReference>
<dbReference type="Pfam" id="PF00128">
    <property type="entry name" value="Alpha-amylase"/>
    <property type="match status" value="1"/>
</dbReference>
<dbReference type="Pfam" id="PF02806">
    <property type="entry name" value="Alpha-amylase_C"/>
    <property type="match status" value="1"/>
</dbReference>
<dbReference type="Pfam" id="PF02922">
    <property type="entry name" value="CBM_48"/>
    <property type="match status" value="1"/>
</dbReference>
<dbReference type="PIRSF" id="PIRSF000463">
    <property type="entry name" value="GlgB"/>
    <property type="match status" value="1"/>
</dbReference>
<dbReference type="SMART" id="SM00642">
    <property type="entry name" value="Aamy"/>
    <property type="match status" value="1"/>
</dbReference>
<dbReference type="SUPFAM" id="SSF51445">
    <property type="entry name" value="(Trans)glycosidases"/>
    <property type="match status" value="1"/>
</dbReference>
<dbReference type="SUPFAM" id="SSF81296">
    <property type="entry name" value="E set domains"/>
    <property type="match status" value="1"/>
</dbReference>
<dbReference type="SUPFAM" id="SSF51011">
    <property type="entry name" value="Glycosyl hydrolase domain"/>
    <property type="match status" value="1"/>
</dbReference>
<evidence type="ECO:0000250" key="1"/>
<evidence type="ECO:0000255" key="2"/>
<evidence type="ECO:0000256" key="3">
    <source>
        <dbReference type="SAM" id="MobiDB-lite"/>
    </source>
</evidence>
<evidence type="ECO:0000269" key="4">
    <source>
    </source>
</evidence>
<evidence type="ECO:0000305" key="5"/>
<accession>Q41059</accession>
<keyword id="KW-0035">Amyloplast</keyword>
<keyword id="KW-0150">Chloroplast</keyword>
<keyword id="KW-0903">Direct protein sequencing</keyword>
<keyword id="KW-0934">Plastid</keyword>
<keyword id="KW-0808">Transferase</keyword>
<keyword id="KW-0809">Transit peptide</keyword>
<feature type="transit peptide" description="Chloroplast">
    <location>
        <begin position="1" status="less than"/>
        <end position="58"/>
    </location>
</feature>
<feature type="chain" id="PRO_5000146302" description="1,4-alpha-glucan-branching enzyme 1, chloroplastic/amyloplastic" evidence="2">
    <location>
        <begin position="59"/>
        <end position="826"/>
    </location>
</feature>
<feature type="region of interest" description="Disordered" evidence="3">
    <location>
        <begin position="782"/>
        <end position="813"/>
    </location>
</feature>
<feature type="active site" description="Nucleophile" evidence="1">
    <location>
        <position position="409"/>
    </location>
</feature>
<feature type="active site" description="Proton donor" evidence="1">
    <location>
        <position position="464"/>
    </location>
</feature>
<feature type="non-terminal residue">
    <location>
        <position position="1"/>
    </location>
</feature>
<name>GLGB2_PEA</name>
<sequence>ATTTTTTHNSKNKQYLAKQKPVELTLGYQNPNGCKVCSFGSKGSIYQKVSSGFKGVSVMTDDKSTMPSVEEDFENIGILNVDSSLEPFKDHFKYRLKRYLHQKKLIEEYEGGLQEFAKGYLKFGFNREEDGISYREWAPAAQEAQIIGDFNGWNGSNLHMEKDQFGVWSIQIPDADGNPAIPHNSRVKFRFKHSDGVWVDRIPAWIKYATVDPTRFAAPYDGVYWDPPLSERYQFKHPRPPKPKAPRIYEAHVGMSSSEPRINSYREFADDVLPRIRENNYNTVQLMAVMEHSYYASFWYHVTKPFFAVSSRSGSPEDLKYLIDKAHSLGLNVLMDVIHSHASNNVTDGLNGFDVGQSSQQSYFHAGDRGYHKLWDSRLFNYANWKSSFLLSNLRWWLEEYKFDGFRFDGVTSMLYHHHGINMAFTGDYNEYFSEETDVDAVVYLMLANSLVHDILPDATDIAEDVSGMPGLGRPVSEVGIGFDYRLAMAIPDKWIDYLKNKKDSEWSMKEISLNLTNRRYTEKCVSYAESHDQSIVGDKTIAFLLMDEEMYSSMSCLTMLSPTIERGISLHKMIHFITLALGGEGYLNFMGNEFGHPEWIDFPREGNGWSYEKCRLTQWNLVDTNHLRYKFMNAFDRAMNLLDDKFSILASTKQIVSSTNNEDKVIVFERGDLVFVFNFHPENTYEGYKVGCDLPGKYRVALDSDATEFGGHGRVGHDADQFTSPEGIPGIPETNFNNRPNSFKVLSPPHTCVVYYRVDERQEESNNPNLGSVEETFAAADTDVARIPDVSMESEDSNLDRIEDNSEDAVDAGILKVEREVVGDN</sequence>